<sequence>MNPSAPSYPMASLYVGDLHPDVTEAMLYEKFSPAGPILSIRVCRDMMTRRSLGYAYVNFQQPADAERALDTMNFDVIKGRPVRIMWSQRDPSLRKSGVGNIFIKNLDKSIDNKALYDTFSAFGNILSCKVVCDENGSKGYGFVHFETHEAAERAIEKMNGMLLNDRKVFVGRFKSRKEREAEMGARAKEFTNVYIKNFGEDMDDEKLKEIFCKYGPALSIRVMTDDSGKSKGFGFVSFERHEDAQRAVDEMNGKEMNGKQVYVGRAQKKGERQTELKRKFEQMKQDRMTRYQGVNLYVKNLDDGLDDERLRKEFSPFGTITSAKVMMEGGRSKGFGFVCFSSPEEATKAVTEMNGRIVATKPLYVALAQRKEERQAHLTSQYMQRMASVRAVPNPVLNPYQPAPPSGYFMAAIPQAQNRAAYYPTSQLAQLRPSPRWATQGVRPQHFQNMPNAAVRPSAPRPQTFNPVRPASQVPRMMTSQRMGSQAMGPRPAAAGAATGPAQVRGVPQYKYAPGVRNPQQHMPTQPQVPMQQPAVHVQGQEPLTASMLAAAPPQEQKQMLGERLFPLIQNMHPSLAGKITGMLLEIDNSELLHMLESPESLRSKVDEAVAVLQAHQAKEAAQKSVPSPAVPAV</sequence>
<comment type="function">
    <text evidence="1 2 6">Binds the poly(A) tail of mRNA (By similarity). Prevents mRNA deadenylation and confers poly(A) stability (By similarity). Binds to N6-methyladenosine (m6A)-containing mRNAs (By similarity). Stimulates the translation of mRNAs to which it is bound, acting, at least in part, with dazl (By similarity). Involved in the maternal-to-zygotic transition in early embryo via interaction with ybx1: interaction recruits pabpc1a on C5-methylcytosine (m5C)-containing maternal mRNAs, preventing their degradation (PubMed:31399345).</text>
</comment>
<comment type="subunit">
    <text evidence="6">Interacts with ybx1; interaction recruits pabpc1a on C5-methylcytosine (m5C)-containing mRNAs, preventing their degradation.</text>
</comment>
<comment type="subcellular location">
    <subcellularLocation>
        <location evidence="2">Cytoplasm</location>
    </subcellularLocation>
    <text evidence="2">Associated with polysomes.</text>
</comment>
<comment type="domain">
    <text evidence="2">RRM4, together with the C- and N-terminal regions, is sufficient for RNA-binding. RRM 1 has no RNA-binding activity itself, but improves discrimination between poly(A) and poly(U) in combination with the other repeats.</text>
</comment>
<comment type="similarity">
    <text evidence="5">Belongs to the polyadenylate-binding protein type-1 family.</text>
</comment>
<evidence type="ECO:0000250" key="1">
    <source>
        <dbReference type="UniProtKB" id="P11940"/>
    </source>
</evidence>
<evidence type="ECO:0000250" key="2">
    <source>
        <dbReference type="UniProtKB" id="P20965"/>
    </source>
</evidence>
<evidence type="ECO:0000255" key="3">
    <source>
        <dbReference type="PROSITE-ProRule" id="PRU00176"/>
    </source>
</evidence>
<evidence type="ECO:0000255" key="4">
    <source>
        <dbReference type="PROSITE-ProRule" id="PRU00641"/>
    </source>
</evidence>
<evidence type="ECO:0000255" key="5">
    <source>
        <dbReference type="RuleBase" id="RU362004"/>
    </source>
</evidence>
<evidence type="ECO:0000269" key="6">
    <source>
    </source>
</evidence>
<evidence type="ECO:0000305" key="7"/>
<evidence type="ECO:0000312" key="8">
    <source>
        <dbReference type="EMBL" id="AAH99992.1"/>
    </source>
</evidence>
<evidence type="ECO:0000312" key="9">
    <source>
        <dbReference type="ZFIN" id="ZDB-GENE-030131-3238"/>
    </source>
</evidence>
<keyword id="KW-0963">Cytoplasm</keyword>
<keyword id="KW-0507">mRNA processing</keyword>
<keyword id="KW-0648">Protein biosynthesis</keyword>
<keyword id="KW-1185">Reference proteome</keyword>
<keyword id="KW-0677">Repeat</keyword>
<keyword id="KW-0694">RNA-binding</keyword>
<keyword id="KW-0810">Translation regulation</keyword>
<gene>
    <name evidence="9" type="primary">pabpc1a</name>
</gene>
<proteinExistence type="evidence at protein level"/>
<organism>
    <name type="scientific">Danio rerio</name>
    <name type="common">Zebrafish</name>
    <name type="synonym">Brachydanio rerio</name>
    <dbReference type="NCBI Taxonomy" id="7955"/>
    <lineage>
        <taxon>Eukaryota</taxon>
        <taxon>Metazoa</taxon>
        <taxon>Chordata</taxon>
        <taxon>Craniata</taxon>
        <taxon>Vertebrata</taxon>
        <taxon>Euteleostomi</taxon>
        <taxon>Actinopterygii</taxon>
        <taxon>Neopterygii</taxon>
        <taxon>Teleostei</taxon>
        <taxon>Ostariophysi</taxon>
        <taxon>Cypriniformes</taxon>
        <taxon>Danionidae</taxon>
        <taxon>Danioninae</taxon>
        <taxon>Danio</taxon>
    </lineage>
</organism>
<protein>
    <recommendedName>
        <fullName>Polyadenylate-binding protein 1A</fullName>
        <shortName>PABP-1A</shortName>
        <shortName>Poly(A)-binding protein 1A</shortName>
    </recommendedName>
</protein>
<feature type="chain" id="PRO_0000448384" description="Polyadenylate-binding protein 1A">
    <location>
        <begin position="1"/>
        <end position="634"/>
    </location>
</feature>
<feature type="domain" description="RRM 1" evidence="3">
    <location>
        <begin position="11"/>
        <end position="89"/>
    </location>
</feature>
<feature type="domain" description="RRM 2" evidence="3">
    <location>
        <begin position="99"/>
        <end position="175"/>
    </location>
</feature>
<feature type="domain" description="RRM 3" evidence="3">
    <location>
        <begin position="191"/>
        <end position="268"/>
    </location>
</feature>
<feature type="domain" description="RRM 4" evidence="3">
    <location>
        <begin position="294"/>
        <end position="370"/>
    </location>
</feature>
<feature type="domain" description="PABC" evidence="4">
    <location>
        <begin position="541"/>
        <end position="618"/>
    </location>
</feature>
<feature type="sequence conflict" description="In Ref. 2; AAH99992." evidence="7" ref="2">
    <original>H</original>
    <variation>R</variation>
    <location>
        <position position="522"/>
    </location>
</feature>
<reference key="1">
    <citation type="journal article" date="2013" name="Nature">
        <title>The zebrafish reference genome sequence and its relationship to the human genome.</title>
        <authorList>
            <person name="Howe K."/>
            <person name="Clark M.D."/>
            <person name="Torroja C.F."/>
            <person name="Torrance J."/>
            <person name="Berthelot C."/>
            <person name="Muffato M."/>
            <person name="Collins J.E."/>
            <person name="Humphray S."/>
            <person name="McLaren K."/>
            <person name="Matthews L."/>
            <person name="McLaren S."/>
            <person name="Sealy I."/>
            <person name="Caccamo M."/>
            <person name="Churcher C."/>
            <person name="Scott C."/>
            <person name="Barrett J.C."/>
            <person name="Koch R."/>
            <person name="Rauch G.J."/>
            <person name="White S."/>
            <person name="Chow W."/>
            <person name="Kilian B."/>
            <person name="Quintais L.T."/>
            <person name="Guerra-Assuncao J.A."/>
            <person name="Zhou Y."/>
            <person name="Gu Y."/>
            <person name="Yen J."/>
            <person name="Vogel J.H."/>
            <person name="Eyre T."/>
            <person name="Redmond S."/>
            <person name="Banerjee R."/>
            <person name="Chi J."/>
            <person name="Fu B."/>
            <person name="Langley E."/>
            <person name="Maguire S.F."/>
            <person name="Laird G.K."/>
            <person name="Lloyd D."/>
            <person name="Kenyon E."/>
            <person name="Donaldson S."/>
            <person name="Sehra H."/>
            <person name="Almeida-King J."/>
            <person name="Loveland J."/>
            <person name="Trevanion S."/>
            <person name="Jones M."/>
            <person name="Quail M."/>
            <person name="Willey D."/>
            <person name="Hunt A."/>
            <person name="Burton J."/>
            <person name="Sims S."/>
            <person name="McLay K."/>
            <person name="Plumb B."/>
            <person name="Davis J."/>
            <person name="Clee C."/>
            <person name="Oliver K."/>
            <person name="Clark R."/>
            <person name="Riddle C."/>
            <person name="Elliot D."/>
            <person name="Threadgold G."/>
            <person name="Harden G."/>
            <person name="Ware D."/>
            <person name="Begum S."/>
            <person name="Mortimore B."/>
            <person name="Kerry G."/>
            <person name="Heath P."/>
            <person name="Phillimore B."/>
            <person name="Tracey A."/>
            <person name="Corby N."/>
            <person name="Dunn M."/>
            <person name="Johnson C."/>
            <person name="Wood J."/>
            <person name="Clark S."/>
            <person name="Pelan S."/>
            <person name="Griffiths G."/>
            <person name="Smith M."/>
            <person name="Glithero R."/>
            <person name="Howden P."/>
            <person name="Barker N."/>
            <person name="Lloyd C."/>
            <person name="Stevens C."/>
            <person name="Harley J."/>
            <person name="Holt K."/>
            <person name="Panagiotidis G."/>
            <person name="Lovell J."/>
            <person name="Beasley H."/>
            <person name="Henderson C."/>
            <person name="Gordon D."/>
            <person name="Auger K."/>
            <person name="Wright D."/>
            <person name="Collins J."/>
            <person name="Raisen C."/>
            <person name="Dyer L."/>
            <person name="Leung K."/>
            <person name="Robertson L."/>
            <person name="Ambridge K."/>
            <person name="Leongamornlert D."/>
            <person name="McGuire S."/>
            <person name="Gilderthorp R."/>
            <person name="Griffiths C."/>
            <person name="Manthravadi D."/>
            <person name="Nichol S."/>
            <person name="Barker G."/>
            <person name="Whitehead S."/>
            <person name="Kay M."/>
            <person name="Brown J."/>
            <person name="Murnane C."/>
            <person name="Gray E."/>
            <person name="Humphries M."/>
            <person name="Sycamore N."/>
            <person name="Barker D."/>
            <person name="Saunders D."/>
            <person name="Wallis J."/>
            <person name="Babbage A."/>
            <person name="Hammond S."/>
            <person name="Mashreghi-Mohammadi M."/>
            <person name="Barr L."/>
            <person name="Martin S."/>
            <person name="Wray P."/>
            <person name="Ellington A."/>
            <person name="Matthews N."/>
            <person name="Ellwood M."/>
            <person name="Woodmansey R."/>
            <person name="Clark G."/>
            <person name="Cooper J."/>
            <person name="Tromans A."/>
            <person name="Grafham D."/>
            <person name="Skuce C."/>
            <person name="Pandian R."/>
            <person name="Andrews R."/>
            <person name="Harrison E."/>
            <person name="Kimberley A."/>
            <person name="Garnett J."/>
            <person name="Fosker N."/>
            <person name="Hall R."/>
            <person name="Garner P."/>
            <person name="Kelly D."/>
            <person name="Bird C."/>
            <person name="Palmer S."/>
            <person name="Gehring I."/>
            <person name="Berger A."/>
            <person name="Dooley C.M."/>
            <person name="Ersan-Urun Z."/>
            <person name="Eser C."/>
            <person name="Geiger H."/>
            <person name="Geisler M."/>
            <person name="Karotki L."/>
            <person name="Kirn A."/>
            <person name="Konantz J."/>
            <person name="Konantz M."/>
            <person name="Oberlander M."/>
            <person name="Rudolph-Geiger S."/>
            <person name="Teucke M."/>
            <person name="Lanz C."/>
            <person name="Raddatz G."/>
            <person name="Osoegawa K."/>
            <person name="Zhu B."/>
            <person name="Rapp A."/>
            <person name="Widaa S."/>
            <person name="Langford C."/>
            <person name="Yang F."/>
            <person name="Schuster S.C."/>
            <person name="Carter N.P."/>
            <person name="Harrow J."/>
            <person name="Ning Z."/>
            <person name="Herrero J."/>
            <person name="Searle S.M."/>
            <person name="Enright A."/>
            <person name="Geisler R."/>
            <person name="Plasterk R.H."/>
            <person name="Lee C."/>
            <person name="Westerfield M."/>
            <person name="de Jong P.J."/>
            <person name="Zon L.I."/>
            <person name="Postlethwait J.H."/>
            <person name="Nusslein-Volhard C."/>
            <person name="Hubbard T.J."/>
            <person name="Roest Crollius H."/>
            <person name="Rogers J."/>
            <person name="Stemple D.L."/>
        </authorList>
    </citation>
    <scope>NUCLEOTIDE SEQUENCE [LARGE SCALE GENOMIC DNA]</scope>
    <source>
        <strain>Tuebingen</strain>
    </source>
</reference>
<reference key="2">
    <citation type="submission" date="2005-07" db="EMBL/GenBank/DDBJ databases">
        <authorList>
            <consortium name="NIH - Zebrafish Gene Collection (ZGC) project"/>
        </authorList>
    </citation>
    <scope>NUCLEOTIDE SEQUENCE [LARGE SCALE MRNA]</scope>
    <source>
        <strain evidence="8">AB</strain>
    </source>
</reference>
<reference key="3">
    <citation type="journal article" date="2019" name="Mol. Cell">
        <title>RNA 5-methylcytosine facilitates the maternal-to-zygotic transition by preventing maternal mRNA decay.</title>
        <authorList>
            <person name="Yang Y."/>
            <person name="Wang L."/>
            <person name="Han X."/>
            <person name="Yang W.L."/>
            <person name="Zhang M."/>
            <person name="Ma H.L."/>
            <person name="Sun B.F."/>
            <person name="Li A."/>
            <person name="Xia J."/>
            <person name="Chen J."/>
            <person name="Heng J."/>
            <person name="Wu B."/>
            <person name="Chen Y.S."/>
            <person name="Xu J.W."/>
            <person name="Yang X."/>
            <person name="Yao H."/>
            <person name="Sun J."/>
            <person name="Lyu C."/>
            <person name="Wang H.L."/>
            <person name="Huang Y."/>
            <person name="Sun Y.P."/>
            <person name="Zhao Y.L."/>
            <person name="Meng A."/>
            <person name="Ma J."/>
            <person name="Liu F."/>
            <person name="Yang Y.G."/>
        </authorList>
    </citation>
    <scope>FUNCTION</scope>
    <scope>INTERACTION WITH YBX1</scope>
</reference>
<accession>F1QB54</accession>
<accession>Q499B6</accession>
<accession>Q6P5M4</accession>
<dbReference type="EMBL" id="CU855877">
    <property type="status" value="NOT_ANNOTATED_CDS"/>
    <property type="molecule type" value="Genomic_DNA"/>
</dbReference>
<dbReference type="EMBL" id="BC062832">
    <property type="protein sequence ID" value="AAH62832.1"/>
    <property type="molecule type" value="mRNA"/>
</dbReference>
<dbReference type="EMBL" id="BC099992">
    <property type="protein sequence ID" value="AAH99992.1"/>
    <property type="molecule type" value="mRNA"/>
</dbReference>
<dbReference type="RefSeq" id="NP_001026846.1">
    <property type="nucleotide sequence ID" value="NM_001031676.1"/>
</dbReference>
<dbReference type="RefSeq" id="XP_005169828.1">
    <property type="nucleotide sequence ID" value="XM_005169771.5"/>
</dbReference>
<dbReference type="SMR" id="F1QB54"/>
<dbReference type="FunCoup" id="F1QB54">
    <property type="interactions" value="2962"/>
</dbReference>
<dbReference type="IntAct" id="F1QB54">
    <property type="interactions" value="1"/>
</dbReference>
<dbReference type="MINT" id="F1QB54"/>
<dbReference type="STRING" id="7955.ENSDARP00000021064"/>
<dbReference type="PaxDb" id="7955-ENSDARP00000021064"/>
<dbReference type="Ensembl" id="ENSDART00000024729">
    <property type="protein sequence ID" value="ENSDARP00000021064"/>
    <property type="gene ID" value="ENSDARG00000017219"/>
</dbReference>
<dbReference type="Ensembl" id="ENSDART00000148392">
    <property type="protein sequence ID" value="ENSDARP00000124828"/>
    <property type="gene ID" value="ENSDARG00000017219"/>
</dbReference>
<dbReference type="GeneID" id="606498"/>
<dbReference type="KEGG" id="dre:606498"/>
<dbReference type="AGR" id="ZFIN:ZDB-GENE-030131-3238"/>
<dbReference type="CTD" id="606498"/>
<dbReference type="ZFIN" id="ZDB-GENE-030131-3238">
    <property type="gene designation" value="pabpc1a"/>
</dbReference>
<dbReference type="eggNOG" id="KOG0123">
    <property type="taxonomic scope" value="Eukaryota"/>
</dbReference>
<dbReference type="HOGENOM" id="CLU_012062_22_2_1"/>
<dbReference type="InParanoid" id="F1QB54"/>
<dbReference type="OMA" id="NATYSMA"/>
<dbReference type="OrthoDB" id="19742at2759"/>
<dbReference type="PhylomeDB" id="F1QB54"/>
<dbReference type="TreeFam" id="TF300458"/>
<dbReference type="Reactome" id="R-DRE-156827">
    <property type="pathway name" value="L13a-mediated translational silencing of Ceruloplasmin expression"/>
</dbReference>
<dbReference type="Reactome" id="R-DRE-450408">
    <property type="pathway name" value="AUF1 (hnRNP D0) binds and destabilizes mRNA"/>
</dbReference>
<dbReference type="Reactome" id="R-DRE-975956">
    <property type="pathway name" value="Nonsense Mediated Decay (NMD) independent of the Exon Junction Complex (EJC)"/>
</dbReference>
<dbReference type="Reactome" id="R-DRE-975957">
    <property type="pathway name" value="Nonsense Mediated Decay (NMD) enhanced by the Exon Junction Complex (EJC)"/>
</dbReference>
<dbReference type="PRO" id="PR:F1QB54"/>
<dbReference type="Proteomes" id="UP000000437">
    <property type="component" value="Chromosome 16"/>
</dbReference>
<dbReference type="Bgee" id="ENSDARG00000017219">
    <property type="expression patterns" value="Expressed in early embryo and 36 other cell types or tissues"/>
</dbReference>
<dbReference type="GO" id="GO:0010494">
    <property type="term" value="C:cytoplasmic stress granule"/>
    <property type="evidence" value="ECO:0000318"/>
    <property type="project" value="GO_Central"/>
</dbReference>
<dbReference type="GO" id="GO:0005829">
    <property type="term" value="C:cytosol"/>
    <property type="evidence" value="ECO:0000318"/>
    <property type="project" value="GO_Central"/>
</dbReference>
<dbReference type="GO" id="GO:0005634">
    <property type="term" value="C:nucleus"/>
    <property type="evidence" value="ECO:0000318"/>
    <property type="project" value="GO_Central"/>
</dbReference>
<dbReference type="GO" id="GO:1990904">
    <property type="term" value="C:ribonucleoprotein complex"/>
    <property type="evidence" value="ECO:0000318"/>
    <property type="project" value="GO_Central"/>
</dbReference>
<dbReference type="GO" id="GO:0003730">
    <property type="term" value="F:mRNA 3'-UTR binding"/>
    <property type="evidence" value="ECO:0000318"/>
    <property type="project" value="GO_Central"/>
</dbReference>
<dbReference type="GO" id="GO:0008143">
    <property type="term" value="F:poly(A) binding"/>
    <property type="evidence" value="ECO:0000318"/>
    <property type="project" value="GO_Central"/>
</dbReference>
<dbReference type="GO" id="GO:0008266">
    <property type="term" value="F:poly(U) RNA binding"/>
    <property type="evidence" value="ECO:0000318"/>
    <property type="project" value="GO_Central"/>
</dbReference>
<dbReference type="GO" id="GO:0007507">
    <property type="term" value="P:heart development"/>
    <property type="evidence" value="ECO:0000315"/>
    <property type="project" value="ZFIN"/>
</dbReference>
<dbReference type="GO" id="GO:0006397">
    <property type="term" value="P:mRNA processing"/>
    <property type="evidence" value="ECO:0007669"/>
    <property type="project" value="UniProtKB-KW"/>
</dbReference>
<dbReference type="GO" id="GO:0006417">
    <property type="term" value="P:regulation of translation"/>
    <property type="evidence" value="ECO:0007669"/>
    <property type="project" value="UniProtKB-KW"/>
</dbReference>
<dbReference type="GO" id="GO:0006412">
    <property type="term" value="P:translation"/>
    <property type="evidence" value="ECO:0007669"/>
    <property type="project" value="UniProtKB-KW"/>
</dbReference>
<dbReference type="CDD" id="cd12378">
    <property type="entry name" value="RRM1_I_PABPs"/>
    <property type="match status" value="1"/>
</dbReference>
<dbReference type="CDD" id="cd12379">
    <property type="entry name" value="RRM2_I_PABPs"/>
    <property type="match status" value="1"/>
</dbReference>
<dbReference type="CDD" id="cd12380">
    <property type="entry name" value="RRM3_I_PABPs"/>
    <property type="match status" value="1"/>
</dbReference>
<dbReference type="CDD" id="cd12381">
    <property type="entry name" value="RRM4_I_PABPs"/>
    <property type="match status" value="1"/>
</dbReference>
<dbReference type="FunFam" id="1.10.1900.10:FF:000001">
    <property type="entry name" value="Polyadenylate-binding protein"/>
    <property type="match status" value="1"/>
</dbReference>
<dbReference type="FunFam" id="3.30.70.330:FF:000003">
    <property type="entry name" value="Polyadenylate-binding protein"/>
    <property type="match status" value="1"/>
</dbReference>
<dbReference type="FunFam" id="3.30.70.330:FF:000021">
    <property type="entry name" value="Polyadenylate-binding protein"/>
    <property type="match status" value="1"/>
</dbReference>
<dbReference type="FunFam" id="3.30.70.330:FF:000042">
    <property type="entry name" value="Polyadenylate-binding protein"/>
    <property type="match status" value="1"/>
</dbReference>
<dbReference type="FunFam" id="3.30.70.330:FF:000154">
    <property type="entry name" value="Polyadenylate-binding protein"/>
    <property type="match status" value="1"/>
</dbReference>
<dbReference type="Gene3D" id="3.30.70.330">
    <property type="match status" value="4"/>
</dbReference>
<dbReference type="Gene3D" id="1.10.1900.10">
    <property type="entry name" value="c-terminal domain of poly(a) binding protein"/>
    <property type="match status" value="1"/>
</dbReference>
<dbReference type="InterPro" id="IPR012677">
    <property type="entry name" value="Nucleotide-bd_a/b_plait_sf"/>
</dbReference>
<dbReference type="InterPro" id="IPR036053">
    <property type="entry name" value="PABP-dom"/>
</dbReference>
<dbReference type="InterPro" id="IPR006515">
    <property type="entry name" value="PABP_1234"/>
</dbReference>
<dbReference type="InterPro" id="IPR002004">
    <property type="entry name" value="PABP_HYD_C"/>
</dbReference>
<dbReference type="InterPro" id="IPR034364">
    <property type="entry name" value="PABP_RRM1"/>
</dbReference>
<dbReference type="InterPro" id="IPR035979">
    <property type="entry name" value="RBD_domain_sf"/>
</dbReference>
<dbReference type="InterPro" id="IPR045305">
    <property type="entry name" value="RRM2_I_PABPs"/>
</dbReference>
<dbReference type="InterPro" id="IPR000504">
    <property type="entry name" value="RRM_dom"/>
</dbReference>
<dbReference type="InterPro" id="IPR003954">
    <property type="entry name" value="RRM_dom_euk"/>
</dbReference>
<dbReference type="NCBIfam" id="TIGR01628">
    <property type="entry name" value="PABP-1234"/>
    <property type="match status" value="1"/>
</dbReference>
<dbReference type="PANTHER" id="PTHR24012">
    <property type="entry name" value="RNA BINDING PROTEIN"/>
    <property type="match status" value="1"/>
</dbReference>
<dbReference type="Pfam" id="PF00658">
    <property type="entry name" value="MLLE"/>
    <property type="match status" value="1"/>
</dbReference>
<dbReference type="Pfam" id="PF00076">
    <property type="entry name" value="RRM_1"/>
    <property type="match status" value="4"/>
</dbReference>
<dbReference type="SMART" id="SM00517">
    <property type="entry name" value="PolyA"/>
    <property type="match status" value="1"/>
</dbReference>
<dbReference type="SMART" id="SM00360">
    <property type="entry name" value="RRM"/>
    <property type="match status" value="4"/>
</dbReference>
<dbReference type="SMART" id="SM00361">
    <property type="entry name" value="RRM_1"/>
    <property type="match status" value="3"/>
</dbReference>
<dbReference type="SUPFAM" id="SSF63570">
    <property type="entry name" value="PABC (PABP) domain"/>
    <property type="match status" value="1"/>
</dbReference>
<dbReference type="SUPFAM" id="SSF54928">
    <property type="entry name" value="RNA-binding domain, RBD"/>
    <property type="match status" value="2"/>
</dbReference>
<dbReference type="PROSITE" id="PS51309">
    <property type="entry name" value="PABC"/>
    <property type="match status" value="1"/>
</dbReference>
<dbReference type="PROSITE" id="PS50102">
    <property type="entry name" value="RRM"/>
    <property type="match status" value="4"/>
</dbReference>
<name>PABPA_DANRE</name>